<comment type="function">
    <text evidence="1">Catalyzes the exchange of L-arginine for agmatine. The arginine uptake by the bacterium in the macrophage may be a virulence factor against the host innate immune response (By similarity).</text>
</comment>
<comment type="subcellular location">
    <subcellularLocation>
        <location evidence="1">Cell inner membrane</location>
        <topology evidence="1">Multi-pass membrane protein</topology>
    </subcellularLocation>
</comment>
<comment type="similarity">
    <text evidence="3">Belongs to the amino acid-polyamine-organocation (APC) superfamily. Basic amino acid/polyamine antiporter (APA) (TC 2.A.3.2) family.</text>
</comment>
<comment type="sequence caution" evidence="3">
    <conflict type="frameshift">
        <sequence resource="EMBL-CDS" id="AAX50640"/>
    </conflict>
    <text>CTA_0406, CTA_0407 and CTA_0408 have been merged into one gene.</text>
</comment>
<comment type="sequence caution" evidence="3">
    <conflict type="frameshift">
        <sequence resource="EMBL-CDS" id="AAX50641"/>
    </conflict>
    <text>CTA_0406, CTA_0407 and CTA_0408 have been merged into one gene.</text>
</comment>
<comment type="sequence caution" evidence="3">
    <conflict type="frameshift">
        <sequence resource="EMBL-CDS" id="AAX50642"/>
    </conflict>
    <text>CTA_0406, CTA_0407 and CTA_0408 have been merged into one gene.</text>
</comment>
<proteinExistence type="inferred from homology"/>
<evidence type="ECO:0000250" key="1"/>
<evidence type="ECO:0000255" key="2"/>
<evidence type="ECO:0000305" key="3"/>
<sequence length="483" mass="52658">MLLKKRSPTSILGTLALTGIVISSMIGGGIFSLPQNMVASASAGAVMLAWMLSGIGIFFIANTFKTLSIIRPDLKAGIYTYSREGFGPYVGFTIAWGYWLCQIFGNVDYAVITMDALNYFFPPYFAGGNTIPAILLGSLLIWIFNYIVLRGIRQASFVNIIGAVCTLIPLLLFILITARFFKFSIFKTDFWGTAPQHTLGSIGSQLKSTMLVTLWAFIGIEGAVVISGRAANLSSVGKATILGFSGCLLIYVLLSLLPFGSLFQYQLAKIADPSTAGVLNILVGKWGEVLMNTGLLIAVLTSWLSWTILASEIPYAAAKNGTFPECFAIENSKHAPSFSLFMTSGLMQITMLLVYFSSNAWNTMLEITGVMVLPAYLTSSLFLVKFSLSKKYPKQAAIKARIAMITSLLGSLYSLWLIYAGGLQHLFMVAILLALGIPFYVDSGIRHKQEKTFLNRKEILKMTIVALAALLAIFLFSANKIHL</sequence>
<protein>
    <recommendedName>
        <fullName>Arginine/agmatine antiporter</fullName>
    </recommendedName>
</protein>
<accession>Q3KLY0</accession>
<accession>Q3KLY1</accession>
<accession>Q3KLY2</accession>
<keyword id="KW-0029">Amino-acid transport</keyword>
<keyword id="KW-0050">Antiport</keyword>
<keyword id="KW-0997">Cell inner membrane</keyword>
<keyword id="KW-1003">Cell membrane</keyword>
<keyword id="KW-0472">Membrane</keyword>
<keyword id="KW-0812">Transmembrane</keyword>
<keyword id="KW-1133">Transmembrane helix</keyword>
<keyword id="KW-0813">Transport</keyword>
<keyword id="KW-0843">Virulence</keyword>
<feature type="chain" id="PRO_0000363177" description="Arginine/agmatine antiporter">
    <location>
        <begin position="1"/>
        <end position="483"/>
    </location>
</feature>
<feature type="transmembrane region" description="Helical" evidence="2">
    <location>
        <begin position="11"/>
        <end position="31"/>
    </location>
</feature>
<feature type="transmembrane region" description="Helical" evidence="2">
    <location>
        <begin position="41"/>
        <end position="61"/>
    </location>
</feature>
<feature type="transmembrane region" description="Helical" evidence="2">
    <location>
        <begin position="85"/>
        <end position="105"/>
    </location>
</feature>
<feature type="transmembrane region" description="Helical" evidence="2">
    <location>
        <begin position="124"/>
        <end position="144"/>
    </location>
</feature>
<feature type="transmembrane region" description="Helical" evidence="2">
    <location>
        <begin position="157"/>
        <end position="177"/>
    </location>
</feature>
<feature type="transmembrane region" description="Helical" evidence="2">
    <location>
        <begin position="208"/>
        <end position="228"/>
    </location>
</feature>
<feature type="transmembrane region" description="Helical" evidence="2">
    <location>
        <begin position="239"/>
        <end position="259"/>
    </location>
</feature>
<feature type="transmembrane region" description="Helical" evidence="2">
    <location>
        <begin position="289"/>
        <end position="309"/>
    </location>
</feature>
<feature type="transmembrane region" description="Helical" evidence="2">
    <location>
        <begin position="336"/>
        <end position="356"/>
    </location>
</feature>
<feature type="transmembrane region" description="Helical" evidence="2">
    <location>
        <begin position="364"/>
        <end position="384"/>
    </location>
</feature>
<feature type="transmembrane region" description="Helical" evidence="2">
    <location>
        <begin position="415"/>
        <end position="435"/>
    </location>
</feature>
<feature type="transmembrane region" description="Helical" evidence="2">
    <location>
        <begin position="458"/>
        <end position="478"/>
    </location>
</feature>
<reference key="1">
    <citation type="journal article" date="2005" name="Infect. Immun.">
        <title>Comparative genomic analysis of Chlamydia trachomatis oculotropic and genitotropic strains.</title>
        <authorList>
            <person name="Carlson J.H."/>
            <person name="Porcella S.F."/>
            <person name="McClarty G."/>
            <person name="Caldwell H.D."/>
        </authorList>
    </citation>
    <scope>NUCLEOTIDE SEQUENCE [LARGE SCALE GENOMIC DNA]</scope>
    <source>
        <strain>ATCC VR-571B / DSM 19440 / HAR-13</strain>
    </source>
</reference>
<gene>
    <name type="primary">aaxC</name>
    <name type="synonym">arcD</name>
    <name type="ordered locus">CTA_0406/CTA_0407/CTA_0408</name>
</gene>
<name>AAXC_CHLTA</name>
<dbReference type="EMBL" id="CP000051">
    <property type="protein sequence ID" value="AAX50640.1"/>
    <property type="status" value="ALT_FRAME"/>
    <property type="molecule type" value="Genomic_DNA"/>
</dbReference>
<dbReference type="EMBL" id="CP000051">
    <property type="protein sequence ID" value="AAX50641.1"/>
    <property type="status" value="ALT_FRAME"/>
    <property type="molecule type" value="Genomic_DNA"/>
</dbReference>
<dbReference type="EMBL" id="CP000051">
    <property type="protein sequence ID" value="AAX50642.1"/>
    <property type="status" value="ALT_FRAME"/>
    <property type="molecule type" value="Genomic_DNA"/>
</dbReference>
<dbReference type="SMR" id="Q3KLY0"/>
<dbReference type="KEGG" id="cta:CTA_0406"/>
<dbReference type="KEGG" id="cta:CTA_0407"/>
<dbReference type="KEGG" id="cta:CTA_0408"/>
<dbReference type="HOGENOM" id="CLU_154931_1_0_0"/>
<dbReference type="Proteomes" id="UP000002532">
    <property type="component" value="Chromosome"/>
</dbReference>
<dbReference type="GO" id="GO:0005886">
    <property type="term" value="C:plasma membrane"/>
    <property type="evidence" value="ECO:0007669"/>
    <property type="project" value="UniProtKB-SubCell"/>
</dbReference>
<dbReference type="GO" id="GO:0015297">
    <property type="term" value="F:antiporter activity"/>
    <property type="evidence" value="ECO:0007669"/>
    <property type="project" value="UniProtKB-KW"/>
</dbReference>
<dbReference type="GO" id="GO:0006865">
    <property type="term" value="P:amino acid transport"/>
    <property type="evidence" value="ECO:0007669"/>
    <property type="project" value="UniProtKB-KW"/>
</dbReference>
<dbReference type="Gene3D" id="1.20.1740.10">
    <property type="entry name" value="Amino acid/polyamine transporter I"/>
    <property type="match status" value="1"/>
</dbReference>
<dbReference type="InterPro" id="IPR002293">
    <property type="entry name" value="AA/rel_permease1"/>
</dbReference>
<dbReference type="InterPro" id="IPR004754">
    <property type="entry name" value="Amino_acid_antiprt"/>
</dbReference>
<dbReference type="InterPro" id="IPR050367">
    <property type="entry name" value="APC_superfamily"/>
</dbReference>
<dbReference type="NCBIfam" id="TIGR00905">
    <property type="entry name" value="2A0302"/>
    <property type="match status" value="1"/>
</dbReference>
<dbReference type="PANTHER" id="PTHR42770">
    <property type="entry name" value="AMINO ACID TRANSPORTER-RELATED"/>
    <property type="match status" value="1"/>
</dbReference>
<dbReference type="PANTHER" id="PTHR42770:SF4">
    <property type="entry name" value="ARGININE_ORNITHINE ANTIPORTER-RELATED"/>
    <property type="match status" value="1"/>
</dbReference>
<dbReference type="Pfam" id="PF13520">
    <property type="entry name" value="AA_permease_2"/>
    <property type="match status" value="1"/>
</dbReference>
<dbReference type="PIRSF" id="PIRSF006060">
    <property type="entry name" value="AA_transporter"/>
    <property type="match status" value="1"/>
</dbReference>
<organism>
    <name type="scientific">Chlamydia trachomatis serovar A (strain ATCC VR-571B / DSM 19440 / HAR-13)</name>
    <dbReference type="NCBI Taxonomy" id="315277"/>
    <lineage>
        <taxon>Bacteria</taxon>
        <taxon>Pseudomonadati</taxon>
        <taxon>Chlamydiota</taxon>
        <taxon>Chlamydiia</taxon>
        <taxon>Chlamydiales</taxon>
        <taxon>Chlamydiaceae</taxon>
        <taxon>Chlamydia/Chlamydophila group</taxon>
        <taxon>Chlamydia</taxon>
    </lineage>
</organism>